<accession>C3L7A1</accession>
<keyword id="KW-0963">Cytoplasm</keyword>
<keyword id="KW-0251">Elongation factor</keyword>
<keyword id="KW-0648">Protein biosynthesis</keyword>
<proteinExistence type="inferred from homology"/>
<evidence type="ECO:0000255" key="1">
    <source>
        <dbReference type="HAMAP-Rule" id="MF_00050"/>
    </source>
</evidence>
<feature type="chain" id="PRO_1000117559" description="Elongation factor Ts">
    <location>
        <begin position="1"/>
        <end position="295"/>
    </location>
</feature>
<feature type="region of interest" description="Involved in Mg(2+) ion dislocation from EF-Tu" evidence="1">
    <location>
        <begin position="79"/>
        <end position="82"/>
    </location>
</feature>
<comment type="function">
    <text evidence="1">Associates with the EF-Tu.GDP complex and induces the exchange of GDP to GTP. It remains bound to the aminoacyl-tRNA.EF-Tu.GTP complex up to the GTP hydrolysis stage on the ribosome.</text>
</comment>
<comment type="subcellular location">
    <subcellularLocation>
        <location evidence="1">Cytoplasm</location>
    </subcellularLocation>
</comment>
<comment type="similarity">
    <text evidence="1">Belongs to the EF-Ts family.</text>
</comment>
<organism>
    <name type="scientific">Bacillus anthracis (strain CDC 684 / NRRL 3495)</name>
    <dbReference type="NCBI Taxonomy" id="568206"/>
    <lineage>
        <taxon>Bacteria</taxon>
        <taxon>Bacillati</taxon>
        <taxon>Bacillota</taxon>
        <taxon>Bacilli</taxon>
        <taxon>Bacillales</taxon>
        <taxon>Bacillaceae</taxon>
        <taxon>Bacillus</taxon>
        <taxon>Bacillus cereus group</taxon>
    </lineage>
</organism>
<reference key="1">
    <citation type="submission" date="2008-10" db="EMBL/GenBank/DDBJ databases">
        <title>Genome sequence of Bacillus anthracis str. CDC 684.</title>
        <authorList>
            <person name="Dodson R.J."/>
            <person name="Munk A.C."/>
            <person name="Brettin T."/>
            <person name="Bruce D."/>
            <person name="Detter C."/>
            <person name="Tapia R."/>
            <person name="Han C."/>
            <person name="Sutton G."/>
            <person name="Sims D."/>
        </authorList>
    </citation>
    <scope>NUCLEOTIDE SEQUENCE [LARGE SCALE GENOMIC DNA]</scope>
    <source>
        <strain>CDC 684 / NRRL 3495</strain>
    </source>
</reference>
<sequence>MAITAQMVKELREKTGAGMMDCKKALTETNGDMEKAIDFLREKGIAKAAKKADRIAAEGLTFIETNGNDGLILELNSETDFVAKNEGFQTLIKELAAHLLANKPANVEEAMAQTMENGKKVEEHINEAIAKIGEKLTLRRFEIVSKTDADAFGAYLHMGGRIGVLTVLEGSTDEAAAKDVAMHIAAVNPKYIDRDAVTAEEVEHERQVLTQQALNEGKPEKIVAKMVEGRLGKFFEEICLLDQAFVKNPDMKVRQFVESKGGTLKGFVRYAVGEGIEKREDNFAEEVMNQVKGSN</sequence>
<name>EFTS_BACAC</name>
<dbReference type="EMBL" id="CP001215">
    <property type="protein sequence ID" value="ACP16222.1"/>
    <property type="molecule type" value="Genomic_DNA"/>
</dbReference>
<dbReference type="RefSeq" id="WP_001018581.1">
    <property type="nucleotide sequence ID" value="NC_012581.1"/>
</dbReference>
<dbReference type="SMR" id="C3L7A1"/>
<dbReference type="GeneID" id="45023654"/>
<dbReference type="KEGG" id="bah:BAMEG_0668"/>
<dbReference type="HOGENOM" id="CLU_047155_0_2_9"/>
<dbReference type="GO" id="GO:0005737">
    <property type="term" value="C:cytoplasm"/>
    <property type="evidence" value="ECO:0007669"/>
    <property type="project" value="UniProtKB-SubCell"/>
</dbReference>
<dbReference type="GO" id="GO:0003746">
    <property type="term" value="F:translation elongation factor activity"/>
    <property type="evidence" value="ECO:0007669"/>
    <property type="project" value="UniProtKB-UniRule"/>
</dbReference>
<dbReference type="CDD" id="cd14275">
    <property type="entry name" value="UBA_EF-Ts"/>
    <property type="match status" value="1"/>
</dbReference>
<dbReference type="FunFam" id="1.10.286.20:FF:000003">
    <property type="entry name" value="Elongation factor Ts"/>
    <property type="match status" value="1"/>
</dbReference>
<dbReference type="FunFam" id="1.10.8.10:FF:000001">
    <property type="entry name" value="Elongation factor Ts"/>
    <property type="match status" value="1"/>
</dbReference>
<dbReference type="FunFam" id="3.30.479.20:FF:000005">
    <property type="entry name" value="Elongation factor Ts"/>
    <property type="match status" value="1"/>
</dbReference>
<dbReference type="Gene3D" id="1.10.286.20">
    <property type="match status" value="1"/>
</dbReference>
<dbReference type="Gene3D" id="1.10.8.10">
    <property type="entry name" value="DNA helicase RuvA subunit, C-terminal domain"/>
    <property type="match status" value="1"/>
</dbReference>
<dbReference type="Gene3D" id="3.30.479.20">
    <property type="entry name" value="Elongation factor Ts, dimerisation domain"/>
    <property type="match status" value="2"/>
</dbReference>
<dbReference type="HAMAP" id="MF_00050">
    <property type="entry name" value="EF_Ts"/>
    <property type="match status" value="1"/>
</dbReference>
<dbReference type="InterPro" id="IPR036402">
    <property type="entry name" value="EF-Ts_dimer_sf"/>
</dbReference>
<dbReference type="InterPro" id="IPR001816">
    <property type="entry name" value="Transl_elong_EFTs/EF1B"/>
</dbReference>
<dbReference type="InterPro" id="IPR014039">
    <property type="entry name" value="Transl_elong_EFTs/EF1B_dimer"/>
</dbReference>
<dbReference type="InterPro" id="IPR018101">
    <property type="entry name" value="Transl_elong_Ts_CS"/>
</dbReference>
<dbReference type="InterPro" id="IPR009060">
    <property type="entry name" value="UBA-like_sf"/>
</dbReference>
<dbReference type="NCBIfam" id="TIGR00116">
    <property type="entry name" value="tsf"/>
    <property type="match status" value="1"/>
</dbReference>
<dbReference type="PANTHER" id="PTHR11741">
    <property type="entry name" value="ELONGATION FACTOR TS"/>
    <property type="match status" value="1"/>
</dbReference>
<dbReference type="PANTHER" id="PTHR11741:SF0">
    <property type="entry name" value="ELONGATION FACTOR TS, MITOCHONDRIAL"/>
    <property type="match status" value="1"/>
</dbReference>
<dbReference type="Pfam" id="PF00889">
    <property type="entry name" value="EF_TS"/>
    <property type="match status" value="1"/>
</dbReference>
<dbReference type="SUPFAM" id="SSF54713">
    <property type="entry name" value="Elongation factor Ts (EF-Ts), dimerisation domain"/>
    <property type="match status" value="2"/>
</dbReference>
<dbReference type="SUPFAM" id="SSF46934">
    <property type="entry name" value="UBA-like"/>
    <property type="match status" value="1"/>
</dbReference>
<dbReference type="PROSITE" id="PS01126">
    <property type="entry name" value="EF_TS_1"/>
    <property type="match status" value="1"/>
</dbReference>
<dbReference type="PROSITE" id="PS01127">
    <property type="entry name" value="EF_TS_2"/>
    <property type="match status" value="1"/>
</dbReference>
<gene>
    <name evidence="1" type="primary">tsf</name>
    <name type="ordered locus">BAMEG_0668</name>
</gene>
<protein>
    <recommendedName>
        <fullName evidence="1">Elongation factor Ts</fullName>
        <shortName evidence="1">EF-Ts</shortName>
    </recommendedName>
</protein>